<proteinExistence type="inferred from homology"/>
<protein>
    <recommendedName>
        <fullName evidence="1">Endoribonuclease YbeY</fullName>
        <ecNumber evidence="1">3.1.-.-</ecNumber>
    </recommendedName>
</protein>
<comment type="function">
    <text evidence="1">Single strand-specific metallo-endoribonuclease involved in late-stage 70S ribosome quality control and in maturation of the 3' terminus of the 16S rRNA.</text>
</comment>
<comment type="cofactor">
    <cofactor evidence="1">
        <name>Zn(2+)</name>
        <dbReference type="ChEBI" id="CHEBI:29105"/>
    </cofactor>
    <text evidence="1">Binds 1 zinc ion.</text>
</comment>
<comment type="subcellular location">
    <subcellularLocation>
        <location evidence="1">Cytoplasm</location>
    </subcellularLocation>
</comment>
<comment type="similarity">
    <text evidence="1">Belongs to the endoribonuclease YbeY family.</text>
</comment>
<sequence length="160" mass="17981">MPLELDLQVASAAPDLPSEAQFRAWCELALRQRPESELTIRLVDEAEGLELNSTYRHKDYATNVLSFPADVPDELLDIPLLGDLVICAPVVAREALEQRKPLQAHWAHLVIHGCLHLLGYDHIDDAEAEEMETLERELLAELGHPDPYACDDEEPPSKEK</sequence>
<name>YBEY_PSEAB</name>
<organism>
    <name type="scientific">Pseudomonas aeruginosa (strain UCBPP-PA14)</name>
    <dbReference type="NCBI Taxonomy" id="208963"/>
    <lineage>
        <taxon>Bacteria</taxon>
        <taxon>Pseudomonadati</taxon>
        <taxon>Pseudomonadota</taxon>
        <taxon>Gammaproteobacteria</taxon>
        <taxon>Pseudomonadales</taxon>
        <taxon>Pseudomonadaceae</taxon>
        <taxon>Pseudomonas</taxon>
    </lineage>
</organism>
<dbReference type="EC" id="3.1.-.-" evidence="1"/>
<dbReference type="EMBL" id="CP000438">
    <property type="protein sequence ID" value="ABJ13257.1"/>
    <property type="molecule type" value="Genomic_DNA"/>
</dbReference>
<dbReference type="RefSeq" id="WP_003093160.1">
    <property type="nucleotide sequence ID" value="NZ_CP034244.1"/>
</dbReference>
<dbReference type="SMR" id="Q02SF0"/>
<dbReference type="KEGG" id="pau:PA14_12310"/>
<dbReference type="PseudoCAP" id="PA14_12310"/>
<dbReference type="HOGENOM" id="CLU_106710_0_1_6"/>
<dbReference type="BioCyc" id="PAER208963:G1G74-1022-MONOMER"/>
<dbReference type="PHI-base" id="PHI:10647"/>
<dbReference type="Proteomes" id="UP000000653">
    <property type="component" value="Chromosome"/>
</dbReference>
<dbReference type="GO" id="GO:0005737">
    <property type="term" value="C:cytoplasm"/>
    <property type="evidence" value="ECO:0007669"/>
    <property type="project" value="UniProtKB-SubCell"/>
</dbReference>
<dbReference type="GO" id="GO:0004222">
    <property type="term" value="F:metalloendopeptidase activity"/>
    <property type="evidence" value="ECO:0007669"/>
    <property type="project" value="InterPro"/>
</dbReference>
<dbReference type="GO" id="GO:0004521">
    <property type="term" value="F:RNA endonuclease activity"/>
    <property type="evidence" value="ECO:0007669"/>
    <property type="project" value="UniProtKB-UniRule"/>
</dbReference>
<dbReference type="GO" id="GO:0008270">
    <property type="term" value="F:zinc ion binding"/>
    <property type="evidence" value="ECO:0007669"/>
    <property type="project" value="UniProtKB-UniRule"/>
</dbReference>
<dbReference type="GO" id="GO:0006364">
    <property type="term" value="P:rRNA processing"/>
    <property type="evidence" value="ECO:0007669"/>
    <property type="project" value="UniProtKB-UniRule"/>
</dbReference>
<dbReference type="Gene3D" id="3.40.390.30">
    <property type="entry name" value="Metalloproteases ('zincins'), catalytic domain"/>
    <property type="match status" value="1"/>
</dbReference>
<dbReference type="HAMAP" id="MF_00009">
    <property type="entry name" value="Endoribonucl_YbeY"/>
    <property type="match status" value="1"/>
</dbReference>
<dbReference type="InterPro" id="IPR023091">
    <property type="entry name" value="MetalPrtase_cat_dom_sf_prd"/>
</dbReference>
<dbReference type="InterPro" id="IPR002036">
    <property type="entry name" value="YbeY"/>
</dbReference>
<dbReference type="InterPro" id="IPR020549">
    <property type="entry name" value="YbeY_CS"/>
</dbReference>
<dbReference type="NCBIfam" id="TIGR00043">
    <property type="entry name" value="rRNA maturation RNase YbeY"/>
    <property type="match status" value="1"/>
</dbReference>
<dbReference type="PANTHER" id="PTHR46986">
    <property type="entry name" value="ENDORIBONUCLEASE YBEY, CHLOROPLASTIC"/>
    <property type="match status" value="1"/>
</dbReference>
<dbReference type="PANTHER" id="PTHR46986:SF1">
    <property type="entry name" value="ENDORIBONUCLEASE YBEY, CHLOROPLASTIC"/>
    <property type="match status" value="1"/>
</dbReference>
<dbReference type="Pfam" id="PF02130">
    <property type="entry name" value="YbeY"/>
    <property type="match status" value="1"/>
</dbReference>
<dbReference type="SUPFAM" id="SSF55486">
    <property type="entry name" value="Metalloproteases ('zincins'), catalytic domain"/>
    <property type="match status" value="1"/>
</dbReference>
<dbReference type="PROSITE" id="PS01306">
    <property type="entry name" value="UPF0054"/>
    <property type="match status" value="1"/>
</dbReference>
<reference key="1">
    <citation type="journal article" date="2006" name="Genome Biol.">
        <title>Genomic analysis reveals that Pseudomonas aeruginosa virulence is combinatorial.</title>
        <authorList>
            <person name="Lee D.G."/>
            <person name="Urbach J.M."/>
            <person name="Wu G."/>
            <person name="Liberati N.T."/>
            <person name="Feinbaum R.L."/>
            <person name="Miyata S."/>
            <person name="Diggins L.T."/>
            <person name="He J."/>
            <person name="Saucier M."/>
            <person name="Deziel E."/>
            <person name="Friedman L."/>
            <person name="Li L."/>
            <person name="Grills G."/>
            <person name="Montgomery K."/>
            <person name="Kucherlapati R."/>
            <person name="Rahme L.G."/>
            <person name="Ausubel F.M."/>
        </authorList>
    </citation>
    <scope>NUCLEOTIDE SEQUENCE [LARGE SCALE GENOMIC DNA]</scope>
    <source>
        <strain>UCBPP-PA14</strain>
    </source>
</reference>
<evidence type="ECO:0000255" key="1">
    <source>
        <dbReference type="HAMAP-Rule" id="MF_00009"/>
    </source>
</evidence>
<evidence type="ECO:0000256" key="2">
    <source>
        <dbReference type="SAM" id="MobiDB-lite"/>
    </source>
</evidence>
<feature type="chain" id="PRO_0000284275" description="Endoribonuclease YbeY">
    <location>
        <begin position="1"/>
        <end position="160"/>
    </location>
</feature>
<feature type="region of interest" description="Disordered" evidence="2">
    <location>
        <begin position="141"/>
        <end position="160"/>
    </location>
</feature>
<feature type="binding site" evidence="1">
    <location>
        <position position="112"/>
    </location>
    <ligand>
        <name>Zn(2+)</name>
        <dbReference type="ChEBI" id="CHEBI:29105"/>
        <note>catalytic</note>
    </ligand>
</feature>
<feature type="binding site" evidence="1">
    <location>
        <position position="116"/>
    </location>
    <ligand>
        <name>Zn(2+)</name>
        <dbReference type="ChEBI" id="CHEBI:29105"/>
        <note>catalytic</note>
    </ligand>
</feature>
<feature type="binding site" evidence="1">
    <location>
        <position position="122"/>
    </location>
    <ligand>
        <name>Zn(2+)</name>
        <dbReference type="ChEBI" id="CHEBI:29105"/>
        <note>catalytic</note>
    </ligand>
</feature>
<keyword id="KW-0963">Cytoplasm</keyword>
<keyword id="KW-0255">Endonuclease</keyword>
<keyword id="KW-0378">Hydrolase</keyword>
<keyword id="KW-0479">Metal-binding</keyword>
<keyword id="KW-0540">Nuclease</keyword>
<keyword id="KW-0690">Ribosome biogenesis</keyword>
<keyword id="KW-0698">rRNA processing</keyword>
<keyword id="KW-0862">Zinc</keyword>
<accession>Q02SF0</accession>
<gene>
    <name evidence="1" type="primary">ybeY</name>
    <name type="ordered locus">PA14_12310</name>
</gene>